<evidence type="ECO:0000255" key="1">
    <source>
        <dbReference type="HAMAP-Rule" id="MF_00134"/>
    </source>
</evidence>
<organism>
    <name type="scientific">Bradyrhizobium sp. (strain BTAi1 / ATCC BAA-1182)</name>
    <dbReference type="NCBI Taxonomy" id="288000"/>
    <lineage>
        <taxon>Bacteria</taxon>
        <taxon>Pseudomonadati</taxon>
        <taxon>Pseudomonadota</taxon>
        <taxon>Alphaproteobacteria</taxon>
        <taxon>Hyphomicrobiales</taxon>
        <taxon>Nitrobacteraceae</taxon>
        <taxon>Bradyrhizobium</taxon>
    </lineage>
</organism>
<gene>
    <name evidence="1" type="primary">trpC</name>
    <name type="ordered locus">BBta_4483</name>
</gene>
<feature type="chain" id="PRO_1000018446" description="Indole-3-glycerol phosphate synthase">
    <location>
        <begin position="1"/>
        <end position="272"/>
    </location>
</feature>
<name>TRPC_BRASB</name>
<sequence length="272" mass="29137">MSDILAKIEAYKREEIAAAKRACPLAELEARARDASPPRGFVAAIRNKHANGDYALIAEVKKASPSKGLIRADFDPPVLARAYQAGGAACLSVLTDTPSFQGHLEFMVAARSATTLPVLRKDFLFDTYQVAEARAHGADCILIIMAALDDAAAADIEAAALDSGMDVLIEIHDRDELDRALKLRSPMIGINNRNLRTFETTLATSEALAPLVPKERLLVGESGIFTPADLTRLARVDIQTFLVGESLMRQADVTAATRALLARDASPASAAE</sequence>
<proteinExistence type="inferred from homology"/>
<comment type="catalytic activity">
    <reaction evidence="1">
        <text>1-(2-carboxyphenylamino)-1-deoxy-D-ribulose 5-phosphate + H(+) = (1S,2R)-1-C-(indol-3-yl)glycerol 3-phosphate + CO2 + H2O</text>
        <dbReference type="Rhea" id="RHEA:23476"/>
        <dbReference type="ChEBI" id="CHEBI:15377"/>
        <dbReference type="ChEBI" id="CHEBI:15378"/>
        <dbReference type="ChEBI" id="CHEBI:16526"/>
        <dbReference type="ChEBI" id="CHEBI:58613"/>
        <dbReference type="ChEBI" id="CHEBI:58866"/>
        <dbReference type="EC" id="4.1.1.48"/>
    </reaction>
</comment>
<comment type="pathway">
    <text evidence="1">Amino-acid biosynthesis; L-tryptophan biosynthesis; L-tryptophan from chorismate: step 4/5.</text>
</comment>
<comment type="similarity">
    <text evidence="1">Belongs to the TrpC family.</text>
</comment>
<reference key="1">
    <citation type="journal article" date="2007" name="Science">
        <title>Legumes symbioses: absence of nod genes in photosynthetic bradyrhizobia.</title>
        <authorList>
            <person name="Giraud E."/>
            <person name="Moulin L."/>
            <person name="Vallenet D."/>
            <person name="Barbe V."/>
            <person name="Cytryn E."/>
            <person name="Avarre J.-C."/>
            <person name="Jaubert M."/>
            <person name="Simon D."/>
            <person name="Cartieaux F."/>
            <person name="Prin Y."/>
            <person name="Bena G."/>
            <person name="Hannibal L."/>
            <person name="Fardoux J."/>
            <person name="Kojadinovic M."/>
            <person name="Vuillet L."/>
            <person name="Lajus A."/>
            <person name="Cruveiller S."/>
            <person name="Rouy Z."/>
            <person name="Mangenot S."/>
            <person name="Segurens B."/>
            <person name="Dossat C."/>
            <person name="Franck W.L."/>
            <person name="Chang W.-S."/>
            <person name="Saunders E."/>
            <person name="Bruce D."/>
            <person name="Richardson P."/>
            <person name="Normand P."/>
            <person name="Dreyfus B."/>
            <person name="Pignol D."/>
            <person name="Stacey G."/>
            <person name="Emerich D."/>
            <person name="Vermeglio A."/>
            <person name="Medigue C."/>
            <person name="Sadowsky M."/>
        </authorList>
    </citation>
    <scope>NUCLEOTIDE SEQUENCE [LARGE SCALE GENOMIC DNA]</scope>
    <source>
        <strain>BTAi1 / ATCC BAA-1182</strain>
    </source>
</reference>
<dbReference type="EC" id="4.1.1.48" evidence="1"/>
<dbReference type="EMBL" id="CP000494">
    <property type="protein sequence ID" value="ABQ36519.1"/>
    <property type="molecule type" value="Genomic_DNA"/>
</dbReference>
<dbReference type="RefSeq" id="WP_012044515.1">
    <property type="nucleotide sequence ID" value="NC_009485.1"/>
</dbReference>
<dbReference type="SMR" id="A5EK25"/>
<dbReference type="STRING" id="288000.BBta_4483"/>
<dbReference type="KEGG" id="bbt:BBta_4483"/>
<dbReference type="eggNOG" id="COG0134">
    <property type="taxonomic scope" value="Bacteria"/>
</dbReference>
<dbReference type="HOGENOM" id="CLU_034247_2_0_5"/>
<dbReference type="OrthoDB" id="9804217at2"/>
<dbReference type="UniPathway" id="UPA00035">
    <property type="reaction ID" value="UER00043"/>
</dbReference>
<dbReference type="Proteomes" id="UP000000246">
    <property type="component" value="Chromosome"/>
</dbReference>
<dbReference type="GO" id="GO:0004425">
    <property type="term" value="F:indole-3-glycerol-phosphate synthase activity"/>
    <property type="evidence" value="ECO:0007669"/>
    <property type="project" value="UniProtKB-UniRule"/>
</dbReference>
<dbReference type="GO" id="GO:0004640">
    <property type="term" value="F:phosphoribosylanthranilate isomerase activity"/>
    <property type="evidence" value="ECO:0007669"/>
    <property type="project" value="TreeGrafter"/>
</dbReference>
<dbReference type="GO" id="GO:0000162">
    <property type="term" value="P:L-tryptophan biosynthetic process"/>
    <property type="evidence" value="ECO:0007669"/>
    <property type="project" value="UniProtKB-UniRule"/>
</dbReference>
<dbReference type="CDD" id="cd00331">
    <property type="entry name" value="IGPS"/>
    <property type="match status" value="1"/>
</dbReference>
<dbReference type="FunFam" id="3.20.20.70:FF:000024">
    <property type="entry name" value="Indole-3-glycerol phosphate synthase"/>
    <property type="match status" value="1"/>
</dbReference>
<dbReference type="Gene3D" id="3.20.20.70">
    <property type="entry name" value="Aldolase class I"/>
    <property type="match status" value="1"/>
</dbReference>
<dbReference type="HAMAP" id="MF_00134_B">
    <property type="entry name" value="IGPS_B"/>
    <property type="match status" value="1"/>
</dbReference>
<dbReference type="InterPro" id="IPR013785">
    <property type="entry name" value="Aldolase_TIM"/>
</dbReference>
<dbReference type="InterPro" id="IPR045186">
    <property type="entry name" value="Indole-3-glycerol_P_synth"/>
</dbReference>
<dbReference type="InterPro" id="IPR013798">
    <property type="entry name" value="Indole-3-glycerol_P_synth_dom"/>
</dbReference>
<dbReference type="InterPro" id="IPR001468">
    <property type="entry name" value="Indole-3-GlycerolPSynthase_CS"/>
</dbReference>
<dbReference type="InterPro" id="IPR011060">
    <property type="entry name" value="RibuloseP-bd_barrel"/>
</dbReference>
<dbReference type="NCBIfam" id="NF001370">
    <property type="entry name" value="PRK00278.1-2"/>
    <property type="match status" value="1"/>
</dbReference>
<dbReference type="NCBIfam" id="NF001373">
    <property type="entry name" value="PRK00278.1-6"/>
    <property type="match status" value="1"/>
</dbReference>
<dbReference type="NCBIfam" id="NF001377">
    <property type="entry name" value="PRK00278.2-4"/>
    <property type="match status" value="1"/>
</dbReference>
<dbReference type="PANTHER" id="PTHR22854:SF2">
    <property type="entry name" value="INDOLE-3-GLYCEROL-PHOSPHATE SYNTHASE"/>
    <property type="match status" value="1"/>
</dbReference>
<dbReference type="PANTHER" id="PTHR22854">
    <property type="entry name" value="TRYPTOPHAN BIOSYNTHESIS PROTEIN"/>
    <property type="match status" value="1"/>
</dbReference>
<dbReference type="Pfam" id="PF00218">
    <property type="entry name" value="IGPS"/>
    <property type="match status" value="1"/>
</dbReference>
<dbReference type="SUPFAM" id="SSF51366">
    <property type="entry name" value="Ribulose-phoshate binding barrel"/>
    <property type="match status" value="1"/>
</dbReference>
<dbReference type="PROSITE" id="PS00614">
    <property type="entry name" value="IGPS"/>
    <property type="match status" value="1"/>
</dbReference>
<protein>
    <recommendedName>
        <fullName evidence="1">Indole-3-glycerol phosphate synthase</fullName>
        <shortName evidence="1">IGPS</shortName>
        <ecNumber evidence="1">4.1.1.48</ecNumber>
    </recommendedName>
</protein>
<accession>A5EK25</accession>
<keyword id="KW-0028">Amino-acid biosynthesis</keyword>
<keyword id="KW-0057">Aromatic amino acid biosynthesis</keyword>
<keyword id="KW-0210">Decarboxylase</keyword>
<keyword id="KW-0456">Lyase</keyword>
<keyword id="KW-1185">Reference proteome</keyword>
<keyword id="KW-0822">Tryptophan biosynthesis</keyword>